<proteinExistence type="inferred from homology"/>
<name>HPRK_CLOBB</name>
<protein>
    <recommendedName>
        <fullName evidence="1">HPr kinase/phosphorylase</fullName>
        <shortName evidence="1">HPrK/P</shortName>
        <ecNumber evidence="1">2.7.11.-</ecNumber>
        <ecNumber evidence="1">2.7.4.-</ecNumber>
    </recommendedName>
    <alternativeName>
        <fullName evidence="1">HPr(Ser) kinase/phosphorylase</fullName>
    </alternativeName>
</protein>
<sequence>MAVSVKRLINDFDLEVLVEGNEDIKIEVNDVNRPGLQLAGFYNYFAPERIQIIGKAEWSFLQDMQIEVRKKRVKKYLSFNITCLIISRDLEPHEEFIKEARKNNIWVLRSKSVTTKLISKITLYLADKLAPETRLHGVLVDVSGIGILITGESGIGKSETALELIKRGHRLITDDAVDIRESDGTLIGSSPKITIGMLEVRGIGIIDVTQLYGLSSVLEEKEIKLIMHFEHWKDDNDYDRLGIDNQYMDILGIPVKKLTVPVRPGRNIAVIIEAAAVNYRYSLMSKISPVDIIENRMSAVSDEA</sequence>
<gene>
    <name evidence="1" type="primary">hprK</name>
    <name type="ordered locus">CLL_A2846</name>
</gene>
<reference key="1">
    <citation type="submission" date="2008-04" db="EMBL/GenBank/DDBJ databases">
        <title>Complete sequence of Clostridium botulinum strain Eklund.</title>
        <authorList>
            <person name="Brinkac L.M."/>
            <person name="Brown J.L."/>
            <person name="Bruce D."/>
            <person name="Detter C."/>
            <person name="Munk C."/>
            <person name="Smith L.A."/>
            <person name="Smith T.J."/>
            <person name="Sutton G."/>
            <person name="Brettin T.S."/>
        </authorList>
    </citation>
    <scope>NUCLEOTIDE SEQUENCE [LARGE SCALE GENOMIC DNA]</scope>
    <source>
        <strain>Eklund 17B / Type B</strain>
    </source>
</reference>
<feature type="chain" id="PRO_1000139898" description="HPr kinase/phosphorylase">
    <location>
        <begin position="1"/>
        <end position="304"/>
    </location>
</feature>
<feature type="region of interest" description="Important for the catalytic mechanism of both phosphorylation and dephosphorylation" evidence="1">
    <location>
        <begin position="198"/>
        <end position="207"/>
    </location>
</feature>
<feature type="region of interest" description="Important for the catalytic mechanism of dephosphorylation" evidence="1">
    <location>
        <begin position="261"/>
        <end position="266"/>
    </location>
</feature>
<feature type="active site" evidence="1">
    <location>
        <position position="136"/>
    </location>
</feature>
<feature type="active site" evidence="1">
    <location>
        <position position="157"/>
    </location>
</feature>
<feature type="active site" description="Proton acceptor; for phosphorylation activity. Proton donor; for dephosphorylation activity" evidence="1">
    <location>
        <position position="175"/>
    </location>
</feature>
<feature type="active site" evidence="1">
    <location>
        <position position="240"/>
    </location>
</feature>
<feature type="binding site" evidence="1">
    <location>
        <begin position="151"/>
        <end position="158"/>
    </location>
    <ligand>
        <name>ATP</name>
        <dbReference type="ChEBI" id="CHEBI:30616"/>
    </ligand>
</feature>
<feature type="binding site" evidence="1">
    <location>
        <position position="158"/>
    </location>
    <ligand>
        <name>Mg(2+)</name>
        <dbReference type="ChEBI" id="CHEBI:18420"/>
    </ligand>
</feature>
<feature type="binding site" evidence="1">
    <location>
        <position position="199"/>
    </location>
    <ligand>
        <name>Mg(2+)</name>
        <dbReference type="ChEBI" id="CHEBI:18420"/>
    </ligand>
</feature>
<keyword id="KW-0067">ATP-binding</keyword>
<keyword id="KW-0119">Carbohydrate metabolism</keyword>
<keyword id="KW-0418">Kinase</keyword>
<keyword id="KW-0460">Magnesium</keyword>
<keyword id="KW-0479">Metal-binding</keyword>
<keyword id="KW-0511">Multifunctional enzyme</keyword>
<keyword id="KW-0547">Nucleotide-binding</keyword>
<keyword id="KW-0723">Serine/threonine-protein kinase</keyword>
<keyword id="KW-0808">Transferase</keyword>
<comment type="function">
    <text evidence="1">Catalyzes the ATP- as well as the pyrophosphate-dependent phosphorylation of a specific serine residue in HPr, a phosphocarrier protein of the phosphoenolpyruvate-dependent sugar phosphotransferase system (PTS). HprK/P also catalyzes the pyrophosphate-producing, inorganic phosphate-dependent dephosphorylation (phosphorolysis) of seryl-phosphorylated HPr (P-Ser-HPr). The two antagonistic activities of HprK/P are regulated by several intracellular metabolites, which change their concentration in response to the absence or presence of rapidly metabolisable carbon sources (glucose, fructose, etc.) in the growth medium. Therefore, by controlling the phosphorylation state of HPr, HPrK/P is a sensor enzyme that plays a major role in the regulation of carbon metabolism and sugar transport: it mediates carbon catabolite repression (CCR), and regulates PTS-catalyzed carbohydrate uptake and inducer exclusion.</text>
</comment>
<comment type="catalytic activity">
    <reaction evidence="1">
        <text>[HPr protein]-L-serine + ATP = [HPr protein]-O-phospho-L-serine + ADP + H(+)</text>
        <dbReference type="Rhea" id="RHEA:46600"/>
        <dbReference type="Rhea" id="RHEA-COMP:11602"/>
        <dbReference type="Rhea" id="RHEA-COMP:11603"/>
        <dbReference type="ChEBI" id="CHEBI:15378"/>
        <dbReference type="ChEBI" id="CHEBI:29999"/>
        <dbReference type="ChEBI" id="CHEBI:30616"/>
        <dbReference type="ChEBI" id="CHEBI:83421"/>
        <dbReference type="ChEBI" id="CHEBI:456216"/>
    </reaction>
</comment>
<comment type="catalytic activity">
    <reaction evidence="1">
        <text>[HPr protein]-O-phospho-L-serine + phosphate + H(+) = [HPr protein]-L-serine + diphosphate</text>
        <dbReference type="Rhea" id="RHEA:46604"/>
        <dbReference type="Rhea" id="RHEA-COMP:11602"/>
        <dbReference type="Rhea" id="RHEA-COMP:11603"/>
        <dbReference type="ChEBI" id="CHEBI:15378"/>
        <dbReference type="ChEBI" id="CHEBI:29999"/>
        <dbReference type="ChEBI" id="CHEBI:33019"/>
        <dbReference type="ChEBI" id="CHEBI:43474"/>
        <dbReference type="ChEBI" id="CHEBI:83421"/>
    </reaction>
</comment>
<comment type="cofactor">
    <cofactor evidence="1">
        <name>Mg(2+)</name>
        <dbReference type="ChEBI" id="CHEBI:18420"/>
    </cofactor>
</comment>
<comment type="subunit">
    <text evidence="1">Homohexamer.</text>
</comment>
<comment type="domain">
    <text evidence="1">The Walker A ATP-binding motif also binds Pi and PPi.</text>
</comment>
<comment type="miscellaneous">
    <text evidence="1">Both phosphorylation and phosphorolysis are carried out by the same active site and suggest a common mechanism for both reactions.</text>
</comment>
<comment type="similarity">
    <text evidence="1">Belongs to the HPrK/P family.</text>
</comment>
<evidence type="ECO:0000255" key="1">
    <source>
        <dbReference type="HAMAP-Rule" id="MF_01249"/>
    </source>
</evidence>
<organism>
    <name type="scientific">Clostridium botulinum (strain Eklund 17B / Type B)</name>
    <dbReference type="NCBI Taxonomy" id="935198"/>
    <lineage>
        <taxon>Bacteria</taxon>
        <taxon>Bacillati</taxon>
        <taxon>Bacillota</taxon>
        <taxon>Clostridia</taxon>
        <taxon>Eubacteriales</taxon>
        <taxon>Clostridiaceae</taxon>
        <taxon>Clostridium</taxon>
    </lineage>
</organism>
<dbReference type="EC" id="2.7.11.-" evidence="1"/>
<dbReference type="EC" id="2.7.4.-" evidence="1"/>
<dbReference type="EMBL" id="CP001056">
    <property type="protein sequence ID" value="ACD22711.1"/>
    <property type="molecule type" value="Genomic_DNA"/>
</dbReference>
<dbReference type="SMR" id="B2TP76"/>
<dbReference type="KEGG" id="cbk:CLL_A2846"/>
<dbReference type="PATRIC" id="fig|935198.13.peg.2806"/>
<dbReference type="HOGENOM" id="CLU_052030_0_1_9"/>
<dbReference type="Proteomes" id="UP000001195">
    <property type="component" value="Chromosome"/>
</dbReference>
<dbReference type="GO" id="GO:0005524">
    <property type="term" value="F:ATP binding"/>
    <property type="evidence" value="ECO:0007669"/>
    <property type="project" value="UniProtKB-UniRule"/>
</dbReference>
<dbReference type="GO" id="GO:0000287">
    <property type="term" value="F:magnesium ion binding"/>
    <property type="evidence" value="ECO:0007669"/>
    <property type="project" value="UniProtKB-UniRule"/>
</dbReference>
<dbReference type="GO" id="GO:0000155">
    <property type="term" value="F:phosphorelay sensor kinase activity"/>
    <property type="evidence" value="ECO:0007669"/>
    <property type="project" value="InterPro"/>
</dbReference>
<dbReference type="GO" id="GO:0004674">
    <property type="term" value="F:protein serine/threonine kinase activity"/>
    <property type="evidence" value="ECO:0007669"/>
    <property type="project" value="UniProtKB-KW"/>
</dbReference>
<dbReference type="GO" id="GO:0004712">
    <property type="term" value="F:protein serine/threonine/tyrosine kinase activity"/>
    <property type="evidence" value="ECO:0007669"/>
    <property type="project" value="UniProtKB-UniRule"/>
</dbReference>
<dbReference type="GO" id="GO:0006109">
    <property type="term" value="P:regulation of carbohydrate metabolic process"/>
    <property type="evidence" value="ECO:0007669"/>
    <property type="project" value="UniProtKB-UniRule"/>
</dbReference>
<dbReference type="CDD" id="cd01918">
    <property type="entry name" value="HprK_C"/>
    <property type="match status" value="1"/>
</dbReference>
<dbReference type="FunFam" id="3.40.50.300:FF:000174">
    <property type="entry name" value="HPr kinase/phosphorylase"/>
    <property type="match status" value="1"/>
</dbReference>
<dbReference type="Gene3D" id="3.40.1390.20">
    <property type="entry name" value="HprK N-terminal domain-like"/>
    <property type="match status" value="1"/>
</dbReference>
<dbReference type="Gene3D" id="3.40.50.300">
    <property type="entry name" value="P-loop containing nucleotide triphosphate hydrolases"/>
    <property type="match status" value="1"/>
</dbReference>
<dbReference type="HAMAP" id="MF_01249">
    <property type="entry name" value="HPr_kinase"/>
    <property type="match status" value="1"/>
</dbReference>
<dbReference type="InterPro" id="IPR003755">
    <property type="entry name" value="HPr(Ser)_kin/Pase"/>
</dbReference>
<dbReference type="InterPro" id="IPR011104">
    <property type="entry name" value="Hpr_kin/Pase_C"/>
</dbReference>
<dbReference type="InterPro" id="IPR011126">
    <property type="entry name" value="Hpr_kin/Pase_Hpr_N"/>
</dbReference>
<dbReference type="InterPro" id="IPR027417">
    <property type="entry name" value="P-loop_NTPase"/>
</dbReference>
<dbReference type="InterPro" id="IPR028979">
    <property type="entry name" value="Ser_kin/Pase_Hpr-like_N_sf"/>
</dbReference>
<dbReference type="NCBIfam" id="TIGR00679">
    <property type="entry name" value="hpr-ser"/>
    <property type="match status" value="1"/>
</dbReference>
<dbReference type="PANTHER" id="PTHR30305:SF1">
    <property type="entry name" value="HPR KINASE_PHOSPHORYLASE"/>
    <property type="match status" value="1"/>
</dbReference>
<dbReference type="PANTHER" id="PTHR30305">
    <property type="entry name" value="PROTEIN YJDM-RELATED"/>
    <property type="match status" value="1"/>
</dbReference>
<dbReference type="Pfam" id="PF07475">
    <property type="entry name" value="Hpr_kinase_C"/>
    <property type="match status" value="1"/>
</dbReference>
<dbReference type="Pfam" id="PF02603">
    <property type="entry name" value="Hpr_kinase_N"/>
    <property type="match status" value="1"/>
</dbReference>
<dbReference type="SUPFAM" id="SSF75138">
    <property type="entry name" value="HprK N-terminal domain-like"/>
    <property type="match status" value="1"/>
</dbReference>
<dbReference type="SUPFAM" id="SSF53795">
    <property type="entry name" value="PEP carboxykinase-like"/>
    <property type="match status" value="1"/>
</dbReference>
<accession>B2TP76</accession>